<organism>
    <name type="scientific">Methanococcus maripaludis (strain C6 / ATCC BAA-1332)</name>
    <dbReference type="NCBI Taxonomy" id="444158"/>
    <lineage>
        <taxon>Archaea</taxon>
        <taxon>Methanobacteriati</taxon>
        <taxon>Methanobacteriota</taxon>
        <taxon>Methanomada group</taxon>
        <taxon>Methanococci</taxon>
        <taxon>Methanococcales</taxon>
        <taxon>Methanococcaceae</taxon>
        <taxon>Methanococcus</taxon>
    </lineage>
</organism>
<evidence type="ECO:0000255" key="1">
    <source>
        <dbReference type="HAMAP-Rule" id="MF_00370"/>
    </source>
</evidence>
<feature type="chain" id="PRO_1000121519" description="Shikimate kinase">
    <location>
        <begin position="1"/>
        <end position="283"/>
    </location>
</feature>
<feature type="binding site" evidence="1">
    <location>
        <begin position="86"/>
        <end position="96"/>
    </location>
    <ligand>
        <name>ATP</name>
        <dbReference type="ChEBI" id="CHEBI:30616"/>
    </ligand>
</feature>
<dbReference type="EC" id="2.7.1.71" evidence="1"/>
<dbReference type="EMBL" id="CP000867">
    <property type="protein sequence ID" value="ABX01448.1"/>
    <property type="molecule type" value="Genomic_DNA"/>
</dbReference>
<dbReference type="SMR" id="A9A6N4"/>
<dbReference type="STRING" id="444158.MmarC6_0631"/>
<dbReference type="KEGG" id="mmx:MmarC6_0631"/>
<dbReference type="eggNOG" id="arCOG01025">
    <property type="taxonomic scope" value="Archaea"/>
</dbReference>
<dbReference type="HOGENOM" id="CLU_073768_0_0_2"/>
<dbReference type="OrthoDB" id="9602at2157"/>
<dbReference type="PhylomeDB" id="A9A6N4"/>
<dbReference type="UniPathway" id="UPA00053">
    <property type="reaction ID" value="UER00088"/>
</dbReference>
<dbReference type="GO" id="GO:0005737">
    <property type="term" value="C:cytoplasm"/>
    <property type="evidence" value="ECO:0007669"/>
    <property type="project" value="UniProtKB-SubCell"/>
</dbReference>
<dbReference type="GO" id="GO:0005524">
    <property type="term" value="F:ATP binding"/>
    <property type="evidence" value="ECO:0007669"/>
    <property type="project" value="UniProtKB-UniRule"/>
</dbReference>
<dbReference type="GO" id="GO:0004765">
    <property type="term" value="F:shikimate kinase activity"/>
    <property type="evidence" value="ECO:0007669"/>
    <property type="project" value="UniProtKB-UniRule"/>
</dbReference>
<dbReference type="GO" id="GO:0008652">
    <property type="term" value="P:amino acid biosynthetic process"/>
    <property type="evidence" value="ECO:0007669"/>
    <property type="project" value="UniProtKB-KW"/>
</dbReference>
<dbReference type="GO" id="GO:0009073">
    <property type="term" value="P:aromatic amino acid family biosynthetic process"/>
    <property type="evidence" value="ECO:0007669"/>
    <property type="project" value="UniProtKB-KW"/>
</dbReference>
<dbReference type="GO" id="GO:0009423">
    <property type="term" value="P:chorismate biosynthetic process"/>
    <property type="evidence" value="ECO:0007669"/>
    <property type="project" value="UniProtKB-UniRule"/>
</dbReference>
<dbReference type="Gene3D" id="3.30.230.10">
    <property type="match status" value="1"/>
</dbReference>
<dbReference type="Gene3D" id="3.30.70.890">
    <property type="entry name" value="GHMP kinase, C-terminal domain"/>
    <property type="match status" value="1"/>
</dbReference>
<dbReference type="HAMAP" id="MF_00370">
    <property type="entry name" value="Shik_kinase_arch"/>
    <property type="match status" value="1"/>
</dbReference>
<dbReference type="InterPro" id="IPR013750">
    <property type="entry name" value="GHMP_kinase_C_dom"/>
</dbReference>
<dbReference type="InterPro" id="IPR036554">
    <property type="entry name" value="GHMP_kinase_C_sf"/>
</dbReference>
<dbReference type="InterPro" id="IPR006204">
    <property type="entry name" value="GHMP_kinase_N_dom"/>
</dbReference>
<dbReference type="InterPro" id="IPR020568">
    <property type="entry name" value="Ribosomal_Su5_D2-typ_SF"/>
</dbReference>
<dbReference type="InterPro" id="IPR014721">
    <property type="entry name" value="Ribsml_uS5_D2-typ_fold_subgr"/>
</dbReference>
<dbReference type="InterPro" id="IPR010189">
    <property type="entry name" value="SK_arc"/>
</dbReference>
<dbReference type="NCBIfam" id="TIGR01920">
    <property type="entry name" value="Shik_kin_archae"/>
    <property type="match status" value="1"/>
</dbReference>
<dbReference type="PANTHER" id="PTHR20861">
    <property type="entry name" value="HOMOSERINE/4-DIPHOSPHOCYTIDYL-2-C-METHYL-D-ERYTHRITOL KINASE"/>
    <property type="match status" value="1"/>
</dbReference>
<dbReference type="PANTHER" id="PTHR20861:SF3">
    <property type="entry name" value="SHIKIMATE KINASE"/>
    <property type="match status" value="1"/>
</dbReference>
<dbReference type="Pfam" id="PF08544">
    <property type="entry name" value="GHMP_kinases_C"/>
    <property type="match status" value="1"/>
</dbReference>
<dbReference type="Pfam" id="PF00288">
    <property type="entry name" value="GHMP_kinases_N"/>
    <property type="match status" value="1"/>
</dbReference>
<dbReference type="PIRSF" id="PIRSF005758">
    <property type="entry name" value="Shikimt_kin_arch"/>
    <property type="match status" value="1"/>
</dbReference>
<dbReference type="SUPFAM" id="SSF55060">
    <property type="entry name" value="GHMP Kinase, C-terminal domain"/>
    <property type="match status" value="1"/>
</dbReference>
<dbReference type="SUPFAM" id="SSF54211">
    <property type="entry name" value="Ribosomal protein S5 domain 2-like"/>
    <property type="match status" value="1"/>
</dbReference>
<reference key="1">
    <citation type="submission" date="2007-10" db="EMBL/GenBank/DDBJ databases">
        <title>Complete sequence of Methanococcus maripaludis C6.</title>
        <authorList>
            <consortium name="US DOE Joint Genome Institute"/>
            <person name="Copeland A."/>
            <person name="Lucas S."/>
            <person name="Lapidus A."/>
            <person name="Barry K."/>
            <person name="Glavina del Rio T."/>
            <person name="Dalin E."/>
            <person name="Tice H."/>
            <person name="Pitluck S."/>
            <person name="Clum A."/>
            <person name="Schmutz J."/>
            <person name="Larimer F."/>
            <person name="Land M."/>
            <person name="Hauser L."/>
            <person name="Kyrpides N."/>
            <person name="Mikhailova N."/>
            <person name="Sieprawska-Lupa M."/>
            <person name="Whitman W.B."/>
            <person name="Richardson P."/>
        </authorList>
    </citation>
    <scope>NUCLEOTIDE SEQUENCE [LARGE SCALE GENOMIC DNA]</scope>
    <source>
        <strain>C6 / ATCC BAA-1332</strain>
    </source>
</reference>
<proteinExistence type="inferred from homology"/>
<sequence>MRCSAVSLGSGTIINAIATGFGSAFGVDLKIKADVELVDNGKKIINGISIDNPTLKPSLVERCVKNVLNYFEVDYSAKISTNGDIPIKSGLSSSSAASNAAVLATIGALGEKVDSDLVLDLAIKSSFEEKLTVTGAYDDATASYFGGITVCNNMERKILKKDEFKEDIKVIVLMPEFEKNVDVNRMKLIKDYVDMAFEKCIAGDYYKALFLNGLLYSSALNFPSNISVDALEAGAITAGLSGTGPSYVALCYSEDEKNVENALKKYGNTVITKPSTNGARILY</sequence>
<keyword id="KW-0028">Amino-acid biosynthesis</keyword>
<keyword id="KW-0057">Aromatic amino acid biosynthesis</keyword>
<keyword id="KW-0067">ATP-binding</keyword>
<keyword id="KW-0963">Cytoplasm</keyword>
<keyword id="KW-0418">Kinase</keyword>
<keyword id="KW-0547">Nucleotide-binding</keyword>
<keyword id="KW-0808">Transferase</keyword>
<protein>
    <recommendedName>
        <fullName evidence="1">Shikimate kinase</fullName>
        <shortName evidence="1">SK</shortName>
        <ecNumber evidence="1">2.7.1.71</ecNumber>
    </recommendedName>
</protein>
<accession>A9A6N4</accession>
<comment type="catalytic activity">
    <reaction evidence="1">
        <text>shikimate + ATP = 3-phosphoshikimate + ADP + H(+)</text>
        <dbReference type="Rhea" id="RHEA:13121"/>
        <dbReference type="ChEBI" id="CHEBI:15378"/>
        <dbReference type="ChEBI" id="CHEBI:30616"/>
        <dbReference type="ChEBI" id="CHEBI:36208"/>
        <dbReference type="ChEBI" id="CHEBI:145989"/>
        <dbReference type="ChEBI" id="CHEBI:456216"/>
        <dbReference type="EC" id="2.7.1.71"/>
    </reaction>
</comment>
<comment type="pathway">
    <text evidence="1">Metabolic intermediate biosynthesis; chorismate biosynthesis; chorismate from D-erythrose 4-phosphate and phosphoenolpyruvate: step 5/7.</text>
</comment>
<comment type="subcellular location">
    <subcellularLocation>
        <location evidence="1">Cytoplasm</location>
    </subcellularLocation>
</comment>
<comment type="similarity">
    <text evidence="1">Belongs to the GHMP kinase family. Archaeal shikimate kinase subfamily.</text>
</comment>
<name>AROK_METM6</name>
<gene>
    <name evidence="1" type="primary">aroK</name>
    <name type="ordered locus">MmarC6_0631</name>
</gene>